<gene>
    <name type="ordered locus">AF_2370.1</name>
</gene>
<proteinExistence type="inferred from homology"/>
<organism>
    <name type="scientific">Archaeoglobus fulgidus (strain ATCC 49558 / DSM 4304 / JCM 9628 / NBRC 100126 / VC-16)</name>
    <dbReference type="NCBI Taxonomy" id="224325"/>
    <lineage>
        <taxon>Archaea</taxon>
        <taxon>Methanobacteriati</taxon>
        <taxon>Methanobacteriota</taxon>
        <taxon>Archaeoglobi</taxon>
        <taxon>Archaeoglobales</taxon>
        <taxon>Archaeoglobaceae</taxon>
        <taxon>Archaeoglobus</taxon>
    </lineage>
</organism>
<feature type="chain" id="PRO_0000150906" description="UPF0147 protein AF_2370.1">
    <location>
        <begin position="1"/>
        <end position="87"/>
    </location>
</feature>
<comment type="similarity">
    <text evidence="1">Belongs to the UPF0147 family.</text>
</comment>
<protein>
    <recommendedName>
        <fullName>UPF0147 protein AF_2370.1</fullName>
    </recommendedName>
</protein>
<reference key="1">
    <citation type="journal article" date="1997" name="Nature">
        <title>The complete genome sequence of the hyperthermophilic, sulphate-reducing archaeon Archaeoglobus fulgidus.</title>
        <authorList>
            <person name="Klenk H.-P."/>
            <person name="Clayton R.A."/>
            <person name="Tomb J.-F."/>
            <person name="White O."/>
            <person name="Nelson K.E."/>
            <person name="Ketchum K.A."/>
            <person name="Dodson R.J."/>
            <person name="Gwinn M.L."/>
            <person name="Hickey E.K."/>
            <person name="Peterson J.D."/>
            <person name="Richardson D.L."/>
            <person name="Kerlavage A.R."/>
            <person name="Graham D.E."/>
            <person name="Kyrpides N.C."/>
            <person name="Fleischmann R.D."/>
            <person name="Quackenbush J."/>
            <person name="Lee N.H."/>
            <person name="Sutton G.G."/>
            <person name="Gill S.R."/>
            <person name="Kirkness E.F."/>
            <person name="Dougherty B.A."/>
            <person name="McKenney K."/>
            <person name="Adams M.D."/>
            <person name="Loftus B.J."/>
            <person name="Peterson S.N."/>
            <person name="Reich C.I."/>
            <person name="McNeil L.K."/>
            <person name="Badger J.H."/>
            <person name="Glodek A."/>
            <person name="Zhou L."/>
            <person name="Overbeek R."/>
            <person name="Gocayne J.D."/>
            <person name="Weidman J.F."/>
            <person name="McDonald L.A."/>
            <person name="Utterback T.R."/>
            <person name="Cotton M.D."/>
            <person name="Spriggs T."/>
            <person name="Artiach P."/>
            <person name="Kaine B.P."/>
            <person name="Sykes S.M."/>
            <person name="Sadow P.W."/>
            <person name="D'Andrea K.P."/>
            <person name="Bowman C."/>
            <person name="Fujii C."/>
            <person name="Garland S.A."/>
            <person name="Mason T.M."/>
            <person name="Olsen G.J."/>
            <person name="Fraser C.M."/>
            <person name="Smith H.O."/>
            <person name="Woese C.R."/>
            <person name="Venter J.C."/>
        </authorList>
    </citation>
    <scope>NUCLEOTIDE SEQUENCE [LARGE SCALE GENOMIC DNA]</scope>
    <source>
        <strain>ATCC 49558 / DSM 4304 / JCM 9628 / NBRC 100126 / VC-16</strain>
    </source>
</reference>
<reference key="2">
    <citation type="unpublished observations" date="2001-04">
        <authorList>
            <person name="Medigue C."/>
            <person name="Bocs S."/>
        </authorList>
    </citation>
    <scope>IDENTIFICATION</scope>
</reference>
<name>YN7A_ARCFU</name>
<accession>P58016</accession>
<keyword id="KW-1185">Reference proteome</keyword>
<dbReference type="EMBL" id="AE000782">
    <property type="status" value="NOT_ANNOTATED_CDS"/>
    <property type="molecule type" value="Genomic_DNA"/>
</dbReference>
<dbReference type="SMR" id="P58016"/>
<dbReference type="PhylomeDB" id="P58016"/>
<dbReference type="Proteomes" id="UP000002199">
    <property type="component" value="Chromosome"/>
</dbReference>
<dbReference type="Gene3D" id="1.20.1440.50">
    <property type="entry name" value="Ta0600-like"/>
    <property type="match status" value="1"/>
</dbReference>
<dbReference type="HAMAP" id="MF_00342">
    <property type="entry name" value="UPF0147"/>
    <property type="match status" value="1"/>
</dbReference>
<dbReference type="InterPro" id="IPR023130">
    <property type="entry name" value="Ta0600-like_sf"/>
</dbReference>
<dbReference type="InterPro" id="IPR005354">
    <property type="entry name" value="UPF0147"/>
</dbReference>
<dbReference type="NCBIfam" id="NF003319">
    <property type="entry name" value="PRK04330.1"/>
    <property type="match status" value="1"/>
</dbReference>
<dbReference type="Pfam" id="PF03685">
    <property type="entry name" value="UPF0147"/>
    <property type="match status" value="1"/>
</dbReference>
<dbReference type="SUPFAM" id="SSF158436">
    <property type="entry name" value="Ta0600-like"/>
    <property type="match status" value="1"/>
</dbReference>
<evidence type="ECO:0000305" key="1"/>
<sequence length="87" mass="9858">MRSMAKKGLEEVLETLDRIIHDETVPRNVRRVASEIKEKLTTTDEVSLEAASAISVLEDISADPNLPMHVRTMIWNLTSQLERISVE</sequence>